<reference key="1">
    <citation type="journal article" date="2005" name="J. Bacteriol.">
        <title>Insights on evolution of virulence and resistance from the complete genome analysis of an early methicillin-resistant Staphylococcus aureus strain and a biofilm-producing methicillin-resistant Staphylococcus epidermidis strain.</title>
        <authorList>
            <person name="Gill S.R."/>
            <person name="Fouts D.E."/>
            <person name="Archer G.L."/>
            <person name="Mongodin E.F."/>
            <person name="DeBoy R.T."/>
            <person name="Ravel J."/>
            <person name="Paulsen I.T."/>
            <person name="Kolonay J.F."/>
            <person name="Brinkac L.M."/>
            <person name="Beanan M.J."/>
            <person name="Dodson R.J."/>
            <person name="Daugherty S.C."/>
            <person name="Madupu R."/>
            <person name="Angiuoli S.V."/>
            <person name="Durkin A.S."/>
            <person name="Haft D.H."/>
            <person name="Vamathevan J.J."/>
            <person name="Khouri H."/>
            <person name="Utterback T.R."/>
            <person name="Lee C."/>
            <person name="Dimitrov G."/>
            <person name="Jiang L."/>
            <person name="Qin H."/>
            <person name="Weidman J."/>
            <person name="Tran K."/>
            <person name="Kang K.H."/>
            <person name="Hance I.R."/>
            <person name="Nelson K.E."/>
            <person name="Fraser C.M."/>
        </authorList>
    </citation>
    <scope>NUCLEOTIDE SEQUENCE [LARGE SCALE GENOMIC DNA]</scope>
    <source>
        <strain>ATCC 35984 / DSM 28319 / BCRC 17069 / CCUG 31568 / BM 3577 / RP62A</strain>
    </source>
</reference>
<feature type="chain" id="PRO_0000349340" description="Oxygen sensor histidine kinase NreB">
    <location>
        <begin position="1"/>
        <end position="344"/>
    </location>
</feature>
<feature type="domain" description="Histidine kinase" evidence="3">
    <location>
        <begin position="147"/>
        <end position="344"/>
    </location>
</feature>
<feature type="binding site" evidence="2">
    <location>
        <position position="58"/>
    </location>
    <ligand>
        <name>[4Fe-4S] cluster</name>
        <dbReference type="ChEBI" id="CHEBI:49883"/>
    </ligand>
</feature>
<feature type="binding site" evidence="2">
    <location>
        <position position="61"/>
    </location>
    <ligand>
        <name>[4Fe-4S] cluster</name>
        <dbReference type="ChEBI" id="CHEBI:49883"/>
    </ligand>
</feature>
<feature type="binding site" evidence="2">
    <location>
        <position position="73"/>
    </location>
    <ligand>
        <name>[4Fe-4S] cluster</name>
        <dbReference type="ChEBI" id="CHEBI:49883"/>
    </ligand>
</feature>
<feature type="binding site" evidence="2">
    <location>
        <position position="76"/>
    </location>
    <ligand>
        <name>[4Fe-4S] cluster</name>
        <dbReference type="ChEBI" id="CHEBI:49883"/>
    </ligand>
</feature>
<feature type="modified residue" description="Phosphohistidine; by autocatalysis" evidence="3">
    <location>
        <position position="158"/>
    </location>
</feature>
<protein>
    <recommendedName>
        <fullName>Oxygen sensor histidine kinase NreB</fullName>
        <ecNumber>2.7.13.3</ecNumber>
    </recommendedName>
    <alternativeName>
        <fullName>Nitrogen regulation protein B</fullName>
    </alternativeName>
</protein>
<sequence>MLEQTDLSLEQLLKNYYETTNEKIVFVNRQGKIIAMNDAAKDILTEEDNYNAMTNAICHRCEGYSNEYDVQSCKDCFLETTQLQHSNFQVFMKTKDNEIKPFTAMYQNIDEQRGISAFTLQNVAPQIERQEKMYQQKMLHRSIQAQENERKRISRELHDSVIQDMLNIDVELRLLKYKHRDKVLAETSQRIEGLLSQLIDDIRNMSVELRPSSLDDLGIEAAFKSYFKQFEENYGMHIKYDSNIKGMRFDNEIETVVYRVVQEGVFNALKYAEVNEIEVSTHSDGKQIVAEVVDRGKGFSLDHHPKGSGLGLYGMRERAELVNGHVNIETHINRGTIITLDIPI</sequence>
<dbReference type="EC" id="2.7.13.3"/>
<dbReference type="EMBL" id="CP000029">
    <property type="protein sequence ID" value="AAW52895.1"/>
    <property type="molecule type" value="Genomic_DNA"/>
</dbReference>
<dbReference type="RefSeq" id="WP_010959271.1">
    <property type="nucleotide sequence ID" value="NC_002976.3"/>
</dbReference>
<dbReference type="SMR" id="Q5HLK5"/>
<dbReference type="STRING" id="176279.SERP1982"/>
<dbReference type="KEGG" id="ser:SERP1982"/>
<dbReference type="eggNOG" id="COG4585">
    <property type="taxonomic scope" value="Bacteria"/>
</dbReference>
<dbReference type="HOGENOM" id="CLU_000445_114_0_9"/>
<dbReference type="Proteomes" id="UP000000531">
    <property type="component" value="Chromosome"/>
</dbReference>
<dbReference type="GO" id="GO:0005737">
    <property type="term" value="C:cytoplasm"/>
    <property type="evidence" value="ECO:0007669"/>
    <property type="project" value="UniProtKB-SubCell"/>
</dbReference>
<dbReference type="GO" id="GO:0016020">
    <property type="term" value="C:membrane"/>
    <property type="evidence" value="ECO:0007669"/>
    <property type="project" value="InterPro"/>
</dbReference>
<dbReference type="GO" id="GO:0051539">
    <property type="term" value="F:4 iron, 4 sulfur cluster binding"/>
    <property type="evidence" value="ECO:0007669"/>
    <property type="project" value="UniProtKB-KW"/>
</dbReference>
<dbReference type="GO" id="GO:0005524">
    <property type="term" value="F:ATP binding"/>
    <property type="evidence" value="ECO:0007669"/>
    <property type="project" value="UniProtKB-KW"/>
</dbReference>
<dbReference type="GO" id="GO:0005506">
    <property type="term" value="F:iron ion binding"/>
    <property type="evidence" value="ECO:0007669"/>
    <property type="project" value="InterPro"/>
</dbReference>
<dbReference type="GO" id="GO:0000155">
    <property type="term" value="F:phosphorelay sensor kinase activity"/>
    <property type="evidence" value="ECO:0007669"/>
    <property type="project" value="InterPro"/>
</dbReference>
<dbReference type="GO" id="GO:0046983">
    <property type="term" value="F:protein dimerization activity"/>
    <property type="evidence" value="ECO:0007669"/>
    <property type="project" value="InterPro"/>
</dbReference>
<dbReference type="CDD" id="cd16917">
    <property type="entry name" value="HATPase_UhpB-NarQ-NarX-like"/>
    <property type="match status" value="1"/>
</dbReference>
<dbReference type="Gene3D" id="1.20.5.1930">
    <property type="match status" value="1"/>
</dbReference>
<dbReference type="Gene3D" id="3.30.565.10">
    <property type="entry name" value="Histidine kinase-like ATPase, C-terminal domain"/>
    <property type="match status" value="1"/>
</dbReference>
<dbReference type="InterPro" id="IPR036890">
    <property type="entry name" value="HATPase_C_sf"/>
</dbReference>
<dbReference type="InterPro" id="IPR005467">
    <property type="entry name" value="His_kinase_dom"/>
</dbReference>
<dbReference type="InterPro" id="IPR050482">
    <property type="entry name" value="Sensor_HK_TwoCompSys"/>
</dbReference>
<dbReference type="InterPro" id="IPR004358">
    <property type="entry name" value="Sig_transdc_His_kin-like_C"/>
</dbReference>
<dbReference type="InterPro" id="IPR011712">
    <property type="entry name" value="Sig_transdc_His_kin_sub3_dim/P"/>
</dbReference>
<dbReference type="InterPro" id="IPR017203">
    <property type="entry name" value="Sig_transdc_His_kinase_NreB"/>
</dbReference>
<dbReference type="PANTHER" id="PTHR24421">
    <property type="entry name" value="NITRATE/NITRITE SENSOR PROTEIN NARX-RELATED"/>
    <property type="match status" value="1"/>
</dbReference>
<dbReference type="PANTHER" id="PTHR24421:SF10">
    <property type="entry name" value="NITRATE_NITRITE SENSOR PROTEIN NARQ"/>
    <property type="match status" value="1"/>
</dbReference>
<dbReference type="Pfam" id="PF02518">
    <property type="entry name" value="HATPase_c"/>
    <property type="match status" value="1"/>
</dbReference>
<dbReference type="Pfam" id="PF07730">
    <property type="entry name" value="HisKA_3"/>
    <property type="match status" value="1"/>
</dbReference>
<dbReference type="PIRSF" id="PIRSF037432">
    <property type="entry name" value="STHK_NreB"/>
    <property type="match status" value="1"/>
</dbReference>
<dbReference type="PRINTS" id="PR00344">
    <property type="entry name" value="BCTRLSENSOR"/>
</dbReference>
<dbReference type="SMART" id="SM00387">
    <property type="entry name" value="HATPase_c"/>
    <property type="match status" value="1"/>
</dbReference>
<dbReference type="SUPFAM" id="SSF55874">
    <property type="entry name" value="ATPase domain of HSP90 chaperone/DNA topoisomerase II/histidine kinase"/>
    <property type="match status" value="1"/>
</dbReference>
<dbReference type="PROSITE" id="PS50109">
    <property type="entry name" value="HIS_KIN"/>
    <property type="match status" value="1"/>
</dbReference>
<accession>Q5HLK5</accession>
<evidence type="ECO:0000250" key="1"/>
<evidence type="ECO:0000255" key="2"/>
<evidence type="ECO:0000255" key="3">
    <source>
        <dbReference type="PROSITE-ProRule" id="PRU00107"/>
    </source>
</evidence>
<evidence type="ECO:0000305" key="4"/>
<gene>
    <name type="primary">nreB</name>
    <name type="ordered locus">SERP1982</name>
</gene>
<name>NREB_STAEQ</name>
<organism>
    <name type="scientific">Staphylococcus epidermidis (strain ATCC 35984 / DSM 28319 / BCRC 17069 / CCUG 31568 / BM 3577 / RP62A)</name>
    <dbReference type="NCBI Taxonomy" id="176279"/>
    <lineage>
        <taxon>Bacteria</taxon>
        <taxon>Bacillati</taxon>
        <taxon>Bacillota</taxon>
        <taxon>Bacilli</taxon>
        <taxon>Bacillales</taxon>
        <taxon>Staphylococcaceae</taxon>
        <taxon>Staphylococcus</taxon>
    </lineage>
</organism>
<keyword id="KW-0004">4Fe-4S</keyword>
<keyword id="KW-0067">ATP-binding</keyword>
<keyword id="KW-0963">Cytoplasm</keyword>
<keyword id="KW-0408">Iron</keyword>
<keyword id="KW-0411">Iron-sulfur</keyword>
<keyword id="KW-0418">Kinase</keyword>
<keyword id="KW-0479">Metal-binding</keyword>
<keyword id="KW-0547">Nucleotide-binding</keyword>
<keyword id="KW-0597">Phosphoprotein</keyword>
<keyword id="KW-1185">Reference proteome</keyword>
<keyword id="KW-0808">Transferase</keyword>
<keyword id="KW-0902">Two-component regulatory system</keyword>
<comment type="function">
    <text evidence="1">Member of the two-component regulatory system NreB/NreC involved in the control of dissimilatory nitrate/nitrite reduction in response to oxygen. NreB functions as a direct oxygen sensor histidine kinase which is autophosphorylated, in the absence of oxygen, probably at the conserved histidine residue, and transfers its phosphate group probably to a conserved aspartate residue of NreC. NreB/NreC activates the expression of the nitrate (narGHJI) and nitrite (nir) reductase operons, as well as the putative nitrate transporter gene narT (By similarity).</text>
</comment>
<comment type="catalytic activity">
    <reaction>
        <text>ATP + protein L-histidine = ADP + protein N-phospho-L-histidine.</text>
        <dbReference type="EC" id="2.7.13.3"/>
    </reaction>
</comment>
<comment type="cofactor">
    <cofactor evidence="4">
        <name>[4Fe-4S] cluster</name>
        <dbReference type="ChEBI" id="CHEBI:49883"/>
    </cofactor>
    <text evidence="4">Binds 1 [4Fe-4S] cluster.</text>
</comment>
<comment type="subcellular location">
    <subcellularLocation>
        <location evidence="4">Cytoplasm</location>
    </subcellularLocation>
</comment>
<comment type="PTM">
    <text evidence="1">Autophosphorylated.</text>
</comment>
<proteinExistence type="inferred from homology"/>